<evidence type="ECO:0000255" key="1">
    <source>
        <dbReference type="HAMAP-Rule" id="MF_00652"/>
    </source>
</evidence>
<dbReference type="EMBL" id="AE002098">
    <property type="protein sequence ID" value="AAF41304.1"/>
    <property type="molecule type" value="Genomic_DNA"/>
</dbReference>
<dbReference type="PIR" id="E81146">
    <property type="entry name" value="E81146"/>
</dbReference>
<dbReference type="RefSeq" id="NP_273936.1">
    <property type="nucleotide sequence ID" value="NC_003112.2"/>
</dbReference>
<dbReference type="SMR" id="Q9JZU5"/>
<dbReference type="FunCoup" id="Q9JZU5">
    <property type="interactions" value="74"/>
</dbReference>
<dbReference type="STRING" id="122586.NMB0895"/>
<dbReference type="PaxDb" id="122586-NMB0895"/>
<dbReference type="KEGG" id="nme:NMB0895"/>
<dbReference type="PATRIC" id="fig|122586.8.peg.1122"/>
<dbReference type="HOGENOM" id="CLU_061989_0_0_4"/>
<dbReference type="InParanoid" id="Q9JZU5"/>
<dbReference type="OrthoDB" id="9777133at2"/>
<dbReference type="Proteomes" id="UP000000425">
    <property type="component" value="Chromosome"/>
</dbReference>
<dbReference type="GO" id="GO:0005829">
    <property type="term" value="C:cytosol"/>
    <property type="evidence" value="ECO:0000318"/>
    <property type="project" value="GO_Central"/>
</dbReference>
<dbReference type="GO" id="GO:0033194">
    <property type="term" value="P:response to hydroperoxide"/>
    <property type="evidence" value="ECO:0000318"/>
    <property type="project" value="GO_Central"/>
</dbReference>
<dbReference type="HAMAP" id="MF_00652">
    <property type="entry name" value="UPF0246"/>
    <property type="match status" value="1"/>
</dbReference>
<dbReference type="InterPro" id="IPR005583">
    <property type="entry name" value="YaaA"/>
</dbReference>
<dbReference type="NCBIfam" id="NF002541">
    <property type="entry name" value="PRK02101.1-1"/>
    <property type="match status" value="1"/>
</dbReference>
<dbReference type="NCBIfam" id="NF002542">
    <property type="entry name" value="PRK02101.1-3"/>
    <property type="match status" value="1"/>
</dbReference>
<dbReference type="PANTHER" id="PTHR30283:SF4">
    <property type="entry name" value="PEROXIDE STRESS RESISTANCE PROTEIN YAAA"/>
    <property type="match status" value="1"/>
</dbReference>
<dbReference type="PANTHER" id="PTHR30283">
    <property type="entry name" value="PEROXIDE STRESS RESPONSE PROTEIN YAAA"/>
    <property type="match status" value="1"/>
</dbReference>
<dbReference type="Pfam" id="PF03883">
    <property type="entry name" value="H2O2_YaaD"/>
    <property type="match status" value="1"/>
</dbReference>
<proteinExistence type="inferred from homology"/>
<keyword id="KW-1185">Reference proteome</keyword>
<sequence length="259" mass="29696">MFFVLSPAKNLNEKDPAPVSEFTQPDLLAESDILMQQLRELAPQQIAELMHVSDKIALLNAQRNAEWNTPFTPENAKQAVFMFNGDVYEGMDANTLDIGQIRYLQNHVRLLSGLYGLLRPLDLIQPYRLEMGTAFANLRGKNLYEFWGDIITNLLNDTLAQAGSNTLVNLASQEYFKSVNTKKLRARLITPIFKDEKNGKYKIISFYAKRARGLMVRYAAEHHITDPEMLKNFNYEGYAFNDAASNESEWVFMRSEQIK</sequence>
<protein>
    <recommendedName>
        <fullName evidence="1">UPF0246 protein NMB0895</fullName>
    </recommendedName>
</protein>
<gene>
    <name type="ordered locus">NMB0895</name>
</gene>
<feature type="chain" id="PRO_0000203991" description="UPF0246 protein NMB0895">
    <location>
        <begin position="1"/>
        <end position="259"/>
    </location>
</feature>
<accession>Q9JZU5</accession>
<name>Y895_NEIMB</name>
<reference key="1">
    <citation type="journal article" date="2000" name="Science">
        <title>Complete genome sequence of Neisseria meningitidis serogroup B strain MC58.</title>
        <authorList>
            <person name="Tettelin H."/>
            <person name="Saunders N.J."/>
            <person name="Heidelberg J.F."/>
            <person name="Jeffries A.C."/>
            <person name="Nelson K.E."/>
            <person name="Eisen J.A."/>
            <person name="Ketchum K.A."/>
            <person name="Hood D.W."/>
            <person name="Peden J.F."/>
            <person name="Dodson R.J."/>
            <person name="Nelson W.C."/>
            <person name="Gwinn M.L."/>
            <person name="DeBoy R.T."/>
            <person name="Peterson J.D."/>
            <person name="Hickey E.K."/>
            <person name="Haft D.H."/>
            <person name="Salzberg S.L."/>
            <person name="White O."/>
            <person name="Fleischmann R.D."/>
            <person name="Dougherty B.A."/>
            <person name="Mason T.M."/>
            <person name="Ciecko A."/>
            <person name="Parksey D.S."/>
            <person name="Blair E."/>
            <person name="Cittone H."/>
            <person name="Clark E.B."/>
            <person name="Cotton M.D."/>
            <person name="Utterback T.R."/>
            <person name="Khouri H.M."/>
            <person name="Qin H."/>
            <person name="Vamathevan J.J."/>
            <person name="Gill J."/>
            <person name="Scarlato V."/>
            <person name="Masignani V."/>
            <person name="Pizza M."/>
            <person name="Grandi G."/>
            <person name="Sun L."/>
            <person name="Smith H.O."/>
            <person name="Fraser C.M."/>
            <person name="Moxon E.R."/>
            <person name="Rappuoli R."/>
            <person name="Venter J.C."/>
        </authorList>
    </citation>
    <scope>NUCLEOTIDE SEQUENCE [LARGE SCALE GENOMIC DNA]</scope>
    <source>
        <strain>ATCC BAA-335 / MC58</strain>
    </source>
</reference>
<comment type="similarity">
    <text evidence="1">Belongs to the UPF0246 family.</text>
</comment>
<organism>
    <name type="scientific">Neisseria meningitidis serogroup B (strain ATCC BAA-335 / MC58)</name>
    <dbReference type="NCBI Taxonomy" id="122586"/>
    <lineage>
        <taxon>Bacteria</taxon>
        <taxon>Pseudomonadati</taxon>
        <taxon>Pseudomonadota</taxon>
        <taxon>Betaproteobacteria</taxon>
        <taxon>Neisseriales</taxon>
        <taxon>Neisseriaceae</taxon>
        <taxon>Neisseria</taxon>
    </lineage>
</organism>